<name>NDK_EHRCJ</name>
<gene>
    <name evidence="1" type="primary">ndk</name>
    <name type="ordered locus">Ecaj_0893</name>
</gene>
<proteinExistence type="inferred from homology"/>
<accession>Q3YQT1</accession>
<evidence type="ECO:0000255" key="1">
    <source>
        <dbReference type="HAMAP-Rule" id="MF_00451"/>
    </source>
</evidence>
<evidence type="ECO:0000305" key="2"/>
<sequence length="141" mass="15943">MLERTLSILKPDVVKRNITGQVNSYIENSGLKIVTQKMCLLTRFQAEEFYAIHKSQHFFIPLVDFMVSGPIIVQVLEGENAISLYRELMGATDPKKANPGTIRGDFAENIDANCVHGSDSLDNAVREIRFFFSDYELLSLK</sequence>
<comment type="function">
    <text evidence="1">Major role in the synthesis of nucleoside triphosphates other than ATP. The ATP gamma phosphate is transferred to the NDP beta phosphate via a ping-pong mechanism, using a phosphorylated active-site intermediate.</text>
</comment>
<comment type="catalytic activity">
    <reaction evidence="1">
        <text>a 2'-deoxyribonucleoside 5'-diphosphate + ATP = a 2'-deoxyribonucleoside 5'-triphosphate + ADP</text>
        <dbReference type="Rhea" id="RHEA:44640"/>
        <dbReference type="ChEBI" id="CHEBI:30616"/>
        <dbReference type="ChEBI" id="CHEBI:61560"/>
        <dbReference type="ChEBI" id="CHEBI:73316"/>
        <dbReference type="ChEBI" id="CHEBI:456216"/>
        <dbReference type="EC" id="2.7.4.6"/>
    </reaction>
</comment>
<comment type="catalytic activity">
    <reaction evidence="1">
        <text>a ribonucleoside 5'-diphosphate + ATP = a ribonucleoside 5'-triphosphate + ADP</text>
        <dbReference type="Rhea" id="RHEA:18113"/>
        <dbReference type="ChEBI" id="CHEBI:30616"/>
        <dbReference type="ChEBI" id="CHEBI:57930"/>
        <dbReference type="ChEBI" id="CHEBI:61557"/>
        <dbReference type="ChEBI" id="CHEBI:456216"/>
        <dbReference type="EC" id="2.7.4.6"/>
    </reaction>
</comment>
<comment type="cofactor">
    <cofactor evidence="1">
        <name>Mg(2+)</name>
        <dbReference type="ChEBI" id="CHEBI:18420"/>
    </cofactor>
</comment>
<comment type="subunit">
    <text evidence="1">Homotetramer.</text>
</comment>
<comment type="subcellular location">
    <subcellularLocation>
        <location evidence="1">Cytoplasm</location>
    </subcellularLocation>
</comment>
<comment type="similarity">
    <text evidence="1">Belongs to the NDK family.</text>
</comment>
<comment type="sequence caution" evidence="2">
    <conflict type="erroneous initiation">
        <sequence resource="EMBL-CDS" id="AAZ68924"/>
    </conflict>
</comment>
<organism>
    <name type="scientific">Ehrlichia canis (strain Jake)</name>
    <dbReference type="NCBI Taxonomy" id="269484"/>
    <lineage>
        <taxon>Bacteria</taxon>
        <taxon>Pseudomonadati</taxon>
        <taxon>Pseudomonadota</taxon>
        <taxon>Alphaproteobacteria</taxon>
        <taxon>Rickettsiales</taxon>
        <taxon>Anaplasmataceae</taxon>
        <taxon>Ehrlichia</taxon>
    </lineage>
</organism>
<protein>
    <recommendedName>
        <fullName evidence="1">Nucleoside diphosphate kinase</fullName>
        <shortName evidence="1">NDK</shortName>
        <shortName evidence="1">NDP kinase</shortName>
        <ecNumber evidence="1">2.7.4.6</ecNumber>
    </recommendedName>
    <alternativeName>
        <fullName evidence="1">Nucleoside-2-P kinase</fullName>
    </alternativeName>
</protein>
<keyword id="KW-0067">ATP-binding</keyword>
<keyword id="KW-0963">Cytoplasm</keyword>
<keyword id="KW-0418">Kinase</keyword>
<keyword id="KW-0460">Magnesium</keyword>
<keyword id="KW-0479">Metal-binding</keyword>
<keyword id="KW-0546">Nucleotide metabolism</keyword>
<keyword id="KW-0547">Nucleotide-binding</keyword>
<keyword id="KW-0597">Phosphoprotein</keyword>
<keyword id="KW-0808">Transferase</keyword>
<reference key="1">
    <citation type="journal article" date="2006" name="J. Bacteriol.">
        <title>The genome of the obligately intracellular bacterium Ehrlichia canis reveals themes of complex membrane structure and immune evasion strategies.</title>
        <authorList>
            <person name="Mavromatis K."/>
            <person name="Doyle C.K."/>
            <person name="Lykidis A."/>
            <person name="Ivanova N."/>
            <person name="Francino M.P."/>
            <person name="Chain P."/>
            <person name="Shin M."/>
            <person name="Malfatti S."/>
            <person name="Larimer F."/>
            <person name="Copeland A."/>
            <person name="Detter J.C."/>
            <person name="Land M."/>
            <person name="Richardson P.M."/>
            <person name="Yu X.J."/>
            <person name="Walker D.H."/>
            <person name="McBride J.W."/>
            <person name="Kyrpides N.C."/>
        </authorList>
    </citation>
    <scope>NUCLEOTIDE SEQUENCE [LARGE SCALE GENOMIC DNA]</scope>
    <source>
        <strain>Jake</strain>
    </source>
</reference>
<feature type="chain" id="PRO_0000226561" description="Nucleoside diphosphate kinase">
    <location>
        <begin position="1"/>
        <end position="141"/>
    </location>
</feature>
<feature type="active site" description="Pros-phosphohistidine intermediate" evidence="1">
    <location>
        <position position="116"/>
    </location>
</feature>
<feature type="binding site" evidence="1">
    <location>
        <position position="10"/>
    </location>
    <ligand>
        <name>ATP</name>
        <dbReference type="ChEBI" id="CHEBI:30616"/>
    </ligand>
</feature>
<feature type="binding site" evidence="1">
    <location>
        <position position="58"/>
    </location>
    <ligand>
        <name>ATP</name>
        <dbReference type="ChEBI" id="CHEBI:30616"/>
    </ligand>
</feature>
<feature type="binding site" evidence="1">
    <location>
        <position position="86"/>
    </location>
    <ligand>
        <name>ATP</name>
        <dbReference type="ChEBI" id="CHEBI:30616"/>
    </ligand>
</feature>
<feature type="binding site" evidence="1">
    <location>
        <position position="92"/>
    </location>
    <ligand>
        <name>ATP</name>
        <dbReference type="ChEBI" id="CHEBI:30616"/>
    </ligand>
</feature>
<feature type="binding site" evidence="1">
    <location>
        <position position="103"/>
    </location>
    <ligand>
        <name>ATP</name>
        <dbReference type="ChEBI" id="CHEBI:30616"/>
    </ligand>
</feature>
<feature type="binding site" evidence="1">
    <location>
        <position position="113"/>
    </location>
    <ligand>
        <name>ATP</name>
        <dbReference type="ChEBI" id="CHEBI:30616"/>
    </ligand>
</feature>
<dbReference type="EC" id="2.7.4.6" evidence="1"/>
<dbReference type="EMBL" id="CP000107">
    <property type="protein sequence ID" value="AAZ68924.1"/>
    <property type="status" value="ALT_INIT"/>
    <property type="molecule type" value="Genomic_DNA"/>
</dbReference>
<dbReference type="RefSeq" id="WP_081425148.1">
    <property type="nucleotide sequence ID" value="NC_007354.1"/>
</dbReference>
<dbReference type="SMR" id="Q3YQT1"/>
<dbReference type="FunCoup" id="Q3YQT1">
    <property type="interactions" value="311"/>
</dbReference>
<dbReference type="STRING" id="269484.Ecaj_0893"/>
<dbReference type="KEGG" id="ecn:Ecaj_0893"/>
<dbReference type="eggNOG" id="COG0105">
    <property type="taxonomic scope" value="Bacteria"/>
</dbReference>
<dbReference type="HOGENOM" id="CLU_060216_8_1_5"/>
<dbReference type="InParanoid" id="Q3YQT1"/>
<dbReference type="Proteomes" id="UP000000435">
    <property type="component" value="Chromosome"/>
</dbReference>
<dbReference type="GO" id="GO:0005737">
    <property type="term" value="C:cytoplasm"/>
    <property type="evidence" value="ECO:0007669"/>
    <property type="project" value="UniProtKB-SubCell"/>
</dbReference>
<dbReference type="GO" id="GO:0005524">
    <property type="term" value="F:ATP binding"/>
    <property type="evidence" value="ECO:0007669"/>
    <property type="project" value="UniProtKB-UniRule"/>
</dbReference>
<dbReference type="GO" id="GO:0046872">
    <property type="term" value="F:metal ion binding"/>
    <property type="evidence" value="ECO:0007669"/>
    <property type="project" value="UniProtKB-KW"/>
</dbReference>
<dbReference type="GO" id="GO:0004550">
    <property type="term" value="F:nucleoside diphosphate kinase activity"/>
    <property type="evidence" value="ECO:0007669"/>
    <property type="project" value="UniProtKB-UniRule"/>
</dbReference>
<dbReference type="GO" id="GO:0006241">
    <property type="term" value="P:CTP biosynthetic process"/>
    <property type="evidence" value="ECO:0007669"/>
    <property type="project" value="UniProtKB-UniRule"/>
</dbReference>
<dbReference type="GO" id="GO:0006183">
    <property type="term" value="P:GTP biosynthetic process"/>
    <property type="evidence" value="ECO:0007669"/>
    <property type="project" value="UniProtKB-UniRule"/>
</dbReference>
<dbReference type="GO" id="GO:0006228">
    <property type="term" value="P:UTP biosynthetic process"/>
    <property type="evidence" value="ECO:0007669"/>
    <property type="project" value="UniProtKB-UniRule"/>
</dbReference>
<dbReference type="CDD" id="cd04413">
    <property type="entry name" value="NDPk_I"/>
    <property type="match status" value="1"/>
</dbReference>
<dbReference type="FunFam" id="3.30.70.141:FF:000003">
    <property type="entry name" value="Nucleoside diphosphate kinase"/>
    <property type="match status" value="1"/>
</dbReference>
<dbReference type="Gene3D" id="3.30.70.141">
    <property type="entry name" value="Nucleoside diphosphate kinase-like domain"/>
    <property type="match status" value="1"/>
</dbReference>
<dbReference type="HAMAP" id="MF_00451">
    <property type="entry name" value="NDP_kinase"/>
    <property type="match status" value="1"/>
</dbReference>
<dbReference type="InterPro" id="IPR034907">
    <property type="entry name" value="NDK-like_dom"/>
</dbReference>
<dbReference type="InterPro" id="IPR036850">
    <property type="entry name" value="NDK-like_dom_sf"/>
</dbReference>
<dbReference type="InterPro" id="IPR001564">
    <property type="entry name" value="Nucleoside_diP_kinase"/>
</dbReference>
<dbReference type="InterPro" id="IPR023005">
    <property type="entry name" value="Nucleoside_diP_kinase_AS"/>
</dbReference>
<dbReference type="NCBIfam" id="NF001908">
    <property type="entry name" value="PRK00668.1"/>
    <property type="match status" value="1"/>
</dbReference>
<dbReference type="PANTHER" id="PTHR46161">
    <property type="entry name" value="NUCLEOSIDE DIPHOSPHATE KINASE"/>
    <property type="match status" value="1"/>
</dbReference>
<dbReference type="PANTHER" id="PTHR46161:SF3">
    <property type="entry name" value="NUCLEOSIDE DIPHOSPHATE KINASE DDB_G0292928-RELATED"/>
    <property type="match status" value="1"/>
</dbReference>
<dbReference type="Pfam" id="PF00334">
    <property type="entry name" value="NDK"/>
    <property type="match status" value="1"/>
</dbReference>
<dbReference type="PRINTS" id="PR01243">
    <property type="entry name" value="NUCDPKINASE"/>
</dbReference>
<dbReference type="SMART" id="SM00562">
    <property type="entry name" value="NDK"/>
    <property type="match status" value="1"/>
</dbReference>
<dbReference type="SUPFAM" id="SSF54919">
    <property type="entry name" value="Nucleoside diphosphate kinase, NDK"/>
    <property type="match status" value="1"/>
</dbReference>
<dbReference type="PROSITE" id="PS00469">
    <property type="entry name" value="NDPK"/>
    <property type="match status" value="1"/>
</dbReference>
<dbReference type="PROSITE" id="PS51374">
    <property type="entry name" value="NDPK_LIKE"/>
    <property type="match status" value="1"/>
</dbReference>